<dbReference type="EC" id="1.6.5.-" evidence="1"/>
<dbReference type="EC" id="1.7.1.17" evidence="1"/>
<dbReference type="EMBL" id="CP000606">
    <property type="protein sequence ID" value="ABO25395.1"/>
    <property type="molecule type" value="Genomic_DNA"/>
</dbReference>
<dbReference type="RefSeq" id="WP_011867324.1">
    <property type="nucleotide sequence ID" value="NC_009092.1"/>
</dbReference>
<dbReference type="SMR" id="A3QIU7"/>
<dbReference type="STRING" id="323850.Shew_3529"/>
<dbReference type="KEGG" id="slo:Shew_3529"/>
<dbReference type="eggNOG" id="COG1182">
    <property type="taxonomic scope" value="Bacteria"/>
</dbReference>
<dbReference type="HOGENOM" id="CLU_088964_0_0_6"/>
<dbReference type="OrthoDB" id="9787136at2"/>
<dbReference type="Proteomes" id="UP000001558">
    <property type="component" value="Chromosome"/>
</dbReference>
<dbReference type="GO" id="GO:0009055">
    <property type="term" value="F:electron transfer activity"/>
    <property type="evidence" value="ECO:0007669"/>
    <property type="project" value="UniProtKB-UniRule"/>
</dbReference>
<dbReference type="GO" id="GO:0010181">
    <property type="term" value="F:FMN binding"/>
    <property type="evidence" value="ECO:0007669"/>
    <property type="project" value="UniProtKB-UniRule"/>
</dbReference>
<dbReference type="GO" id="GO:0016652">
    <property type="term" value="F:oxidoreductase activity, acting on NAD(P)H as acceptor"/>
    <property type="evidence" value="ECO:0007669"/>
    <property type="project" value="UniProtKB-UniRule"/>
</dbReference>
<dbReference type="GO" id="GO:0016655">
    <property type="term" value="F:oxidoreductase activity, acting on NAD(P)H, quinone or similar compound as acceptor"/>
    <property type="evidence" value="ECO:0007669"/>
    <property type="project" value="InterPro"/>
</dbReference>
<dbReference type="Gene3D" id="3.40.50.360">
    <property type="match status" value="1"/>
</dbReference>
<dbReference type="HAMAP" id="MF_01216">
    <property type="entry name" value="Azoreductase_type1"/>
    <property type="match status" value="1"/>
</dbReference>
<dbReference type="InterPro" id="IPR003680">
    <property type="entry name" value="Flavodoxin_fold"/>
</dbReference>
<dbReference type="InterPro" id="IPR029039">
    <property type="entry name" value="Flavoprotein-like_sf"/>
</dbReference>
<dbReference type="InterPro" id="IPR050104">
    <property type="entry name" value="FMN-dep_NADH:Q_OxRdtase_AzoR1"/>
</dbReference>
<dbReference type="InterPro" id="IPR023048">
    <property type="entry name" value="NADH:quinone_OxRdtase_FMN_depd"/>
</dbReference>
<dbReference type="PANTHER" id="PTHR43741">
    <property type="entry name" value="FMN-DEPENDENT NADH-AZOREDUCTASE 1"/>
    <property type="match status" value="1"/>
</dbReference>
<dbReference type="PANTHER" id="PTHR43741:SF2">
    <property type="entry name" value="FMN-DEPENDENT NADH:QUINONE OXIDOREDUCTASE"/>
    <property type="match status" value="1"/>
</dbReference>
<dbReference type="Pfam" id="PF02525">
    <property type="entry name" value="Flavodoxin_2"/>
    <property type="match status" value="1"/>
</dbReference>
<dbReference type="SUPFAM" id="SSF52218">
    <property type="entry name" value="Flavoproteins"/>
    <property type="match status" value="1"/>
</dbReference>
<feature type="chain" id="PRO_1000066524" description="FMN-dependent NADH:quinone oxidoreductase">
    <location>
        <begin position="1"/>
        <end position="197"/>
    </location>
</feature>
<feature type="binding site" evidence="1">
    <location>
        <position position="10"/>
    </location>
    <ligand>
        <name>FMN</name>
        <dbReference type="ChEBI" id="CHEBI:58210"/>
    </ligand>
</feature>
<feature type="binding site" evidence="1">
    <location>
        <begin position="16"/>
        <end position="18"/>
    </location>
    <ligand>
        <name>FMN</name>
        <dbReference type="ChEBI" id="CHEBI:58210"/>
    </ligand>
</feature>
<feature type="binding site" evidence="1">
    <location>
        <begin position="93"/>
        <end position="96"/>
    </location>
    <ligand>
        <name>FMN</name>
        <dbReference type="ChEBI" id="CHEBI:58210"/>
    </ligand>
</feature>
<feature type="binding site" evidence="1">
    <location>
        <begin position="137"/>
        <end position="140"/>
    </location>
    <ligand>
        <name>FMN</name>
        <dbReference type="ChEBI" id="CHEBI:58210"/>
    </ligand>
</feature>
<keyword id="KW-0285">Flavoprotein</keyword>
<keyword id="KW-0288">FMN</keyword>
<keyword id="KW-0520">NAD</keyword>
<keyword id="KW-0560">Oxidoreductase</keyword>
<keyword id="KW-1185">Reference proteome</keyword>
<proteinExistence type="inferred from homology"/>
<comment type="function">
    <text evidence="1">Quinone reductase that provides resistance to thiol-specific stress caused by electrophilic quinones.</text>
</comment>
<comment type="function">
    <text evidence="1">Also exhibits azoreductase activity. Catalyzes the reductive cleavage of the azo bond in aromatic azo compounds to the corresponding amines.</text>
</comment>
<comment type="catalytic activity">
    <reaction evidence="1">
        <text>2 a quinone + NADH + H(+) = 2 a 1,4-benzosemiquinone + NAD(+)</text>
        <dbReference type="Rhea" id="RHEA:65952"/>
        <dbReference type="ChEBI" id="CHEBI:15378"/>
        <dbReference type="ChEBI" id="CHEBI:57540"/>
        <dbReference type="ChEBI" id="CHEBI:57945"/>
        <dbReference type="ChEBI" id="CHEBI:132124"/>
        <dbReference type="ChEBI" id="CHEBI:134225"/>
    </reaction>
</comment>
<comment type="catalytic activity">
    <reaction evidence="1">
        <text>N,N-dimethyl-1,4-phenylenediamine + anthranilate + 2 NAD(+) = 2-(4-dimethylaminophenyl)diazenylbenzoate + 2 NADH + 2 H(+)</text>
        <dbReference type="Rhea" id="RHEA:55872"/>
        <dbReference type="ChEBI" id="CHEBI:15378"/>
        <dbReference type="ChEBI" id="CHEBI:15783"/>
        <dbReference type="ChEBI" id="CHEBI:16567"/>
        <dbReference type="ChEBI" id="CHEBI:57540"/>
        <dbReference type="ChEBI" id="CHEBI:57945"/>
        <dbReference type="ChEBI" id="CHEBI:71579"/>
        <dbReference type="EC" id="1.7.1.17"/>
    </reaction>
</comment>
<comment type="cofactor">
    <cofactor evidence="1">
        <name>FMN</name>
        <dbReference type="ChEBI" id="CHEBI:58210"/>
    </cofactor>
    <text evidence="1">Binds 1 FMN per subunit.</text>
</comment>
<comment type="subunit">
    <text evidence="1">Homodimer.</text>
</comment>
<comment type="similarity">
    <text evidence="1">Belongs to the azoreductase type 1 family.</text>
</comment>
<accession>A3QIU7</accession>
<reference key="1">
    <citation type="submission" date="2007-03" db="EMBL/GenBank/DDBJ databases">
        <title>Complete sequence of Shewanella loihica PV-4.</title>
        <authorList>
            <consortium name="US DOE Joint Genome Institute"/>
            <person name="Copeland A."/>
            <person name="Lucas S."/>
            <person name="Lapidus A."/>
            <person name="Barry K."/>
            <person name="Detter J.C."/>
            <person name="Glavina del Rio T."/>
            <person name="Hammon N."/>
            <person name="Israni S."/>
            <person name="Dalin E."/>
            <person name="Tice H."/>
            <person name="Pitluck S."/>
            <person name="Chain P."/>
            <person name="Malfatti S."/>
            <person name="Shin M."/>
            <person name="Vergez L."/>
            <person name="Schmutz J."/>
            <person name="Larimer F."/>
            <person name="Land M."/>
            <person name="Hauser L."/>
            <person name="Kyrpides N."/>
            <person name="Mikhailova N."/>
            <person name="Romine M.F."/>
            <person name="Serres G."/>
            <person name="Fredrickson J."/>
            <person name="Tiedje J."/>
            <person name="Richardson P."/>
        </authorList>
    </citation>
    <scope>NUCLEOTIDE SEQUENCE [LARGE SCALE GENOMIC DNA]</scope>
    <source>
        <strain>ATCC BAA-1088 / PV-4</strain>
    </source>
</reference>
<protein>
    <recommendedName>
        <fullName evidence="1">FMN-dependent NADH:quinone oxidoreductase</fullName>
        <ecNumber evidence="1">1.6.5.-</ecNumber>
    </recommendedName>
    <alternativeName>
        <fullName evidence="1">Azo-dye reductase</fullName>
    </alternativeName>
    <alternativeName>
        <fullName evidence="1">FMN-dependent NADH-azo compound oxidoreductase</fullName>
    </alternativeName>
    <alternativeName>
        <fullName evidence="1">FMN-dependent NADH-azoreductase</fullName>
        <ecNumber evidence="1">1.7.1.17</ecNumber>
    </alternativeName>
</protein>
<name>AZOR_SHELP</name>
<gene>
    <name evidence="1" type="primary">azoR</name>
    <name type="ordered locus">Shew_3529</name>
</gene>
<sequence length="197" mass="21183">MAKVLVLKSSILGDYSQSAKLIDHLQQHWQGQGAEVTVRDLAAQPLPVLDGEIAMGLRGGDELSPRQQEVLALSDELVAELKAHDTLVIAAPMYNFSIPTQLKNWIDLVARAGVTFTYTETGPKGLVEGKRAVLVTTRGGVHKNGASDHVVPYLKTVLGFIGIDEVETVYGEALNMGPEANEQGISQAKQSIEQLVA</sequence>
<evidence type="ECO:0000255" key="1">
    <source>
        <dbReference type="HAMAP-Rule" id="MF_01216"/>
    </source>
</evidence>
<organism>
    <name type="scientific">Shewanella loihica (strain ATCC BAA-1088 / PV-4)</name>
    <dbReference type="NCBI Taxonomy" id="323850"/>
    <lineage>
        <taxon>Bacteria</taxon>
        <taxon>Pseudomonadati</taxon>
        <taxon>Pseudomonadota</taxon>
        <taxon>Gammaproteobacteria</taxon>
        <taxon>Alteromonadales</taxon>
        <taxon>Shewanellaceae</taxon>
        <taxon>Shewanella</taxon>
    </lineage>
</organism>